<name>HIS5_BIFLO</name>
<reference key="1">
    <citation type="journal article" date="2002" name="Proc. Natl. Acad. Sci. U.S.A.">
        <title>The genome sequence of Bifidobacterium longum reflects its adaptation to the human gastrointestinal tract.</title>
        <authorList>
            <person name="Schell M.A."/>
            <person name="Karmirantzou M."/>
            <person name="Snel B."/>
            <person name="Vilanova D."/>
            <person name="Berger B."/>
            <person name="Pessi G."/>
            <person name="Zwahlen M.-C."/>
            <person name="Desiere F."/>
            <person name="Bork P."/>
            <person name="Delley M."/>
            <person name="Pridmore R.D."/>
            <person name="Arigoni F."/>
        </authorList>
    </citation>
    <scope>NUCLEOTIDE SEQUENCE [LARGE SCALE GENOMIC DNA]</scope>
    <source>
        <strain>NCC 2705</strain>
    </source>
</reference>
<dbReference type="EC" id="4.3.2.10" evidence="1"/>
<dbReference type="EC" id="3.5.1.2" evidence="1"/>
<dbReference type="EMBL" id="AE014295">
    <property type="protein sequence ID" value="AAN25099.1"/>
    <property type="molecule type" value="Genomic_DNA"/>
</dbReference>
<dbReference type="RefSeq" id="NP_696463.1">
    <property type="nucleotide sequence ID" value="NC_004307.2"/>
</dbReference>
<dbReference type="RefSeq" id="WP_011067978.1">
    <property type="nucleotide sequence ID" value="NC_004307.2"/>
</dbReference>
<dbReference type="SMR" id="Q8G4S6"/>
<dbReference type="STRING" id="206672.BL1299"/>
<dbReference type="MEROPS" id="C26.965"/>
<dbReference type="EnsemblBacteria" id="AAN25099">
    <property type="protein sequence ID" value="AAN25099"/>
    <property type="gene ID" value="BL1299"/>
</dbReference>
<dbReference type="KEGG" id="blo:BL1299"/>
<dbReference type="PATRIC" id="fig|206672.9.peg.148"/>
<dbReference type="HOGENOM" id="CLU_071837_1_0_11"/>
<dbReference type="OrthoDB" id="9807137at2"/>
<dbReference type="PhylomeDB" id="Q8G4S6"/>
<dbReference type="UniPathway" id="UPA00031">
    <property type="reaction ID" value="UER00010"/>
</dbReference>
<dbReference type="Proteomes" id="UP000000439">
    <property type="component" value="Chromosome"/>
</dbReference>
<dbReference type="GO" id="GO:0005737">
    <property type="term" value="C:cytoplasm"/>
    <property type="evidence" value="ECO:0007669"/>
    <property type="project" value="UniProtKB-SubCell"/>
</dbReference>
<dbReference type="GO" id="GO:0004359">
    <property type="term" value="F:glutaminase activity"/>
    <property type="evidence" value="ECO:0007669"/>
    <property type="project" value="UniProtKB-EC"/>
</dbReference>
<dbReference type="GO" id="GO:0000107">
    <property type="term" value="F:imidazoleglycerol-phosphate synthase activity"/>
    <property type="evidence" value="ECO:0007669"/>
    <property type="project" value="UniProtKB-UniRule"/>
</dbReference>
<dbReference type="GO" id="GO:0016829">
    <property type="term" value="F:lyase activity"/>
    <property type="evidence" value="ECO:0007669"/>
    <property type="project" value="UniProtKB-KW"/>
</dbReference>
<dbReference type="GO" id="GO:0000105">
    <property type="term" value="P:L-histidine biosynthetic process"/>
    <property type="evidence" value="ECO:0007669"/>
    <property type="project" value="UniProtKB-UniRule"/>
</dbReference>
<dbReference type="CDD" id="cd01748">
    <property type="entry name" value="GATase1_IGP_Synthase"/>
    <property type="match status" value="1"/>
</dbReference>
<dbReference type="Gene3D" id="3.40.50.880">
    <property type="match status" value="1"/>
</dbReference>
<dbReference type="HAMAP" id="MF_00278">
    <property type="entry name" value="HisH"/>
    <property type="match status" value="1"/>
</dbReference>
<dbReference type="InterPro" id="IPR029062">
    <property type="entry name" value="Class_I_gatase-like"/>
</dbReference>
<dbReference type="InterPro" id="IPR017926">
    <property type="entry name" value="GATASE"/>
</dbReference>
<dbReference type="InterPro" id="IPR010139">
    <property type="entry name" value="Imidazole-glycPsynth_HisH"/>
</dbReference>
<dbReference type="NCBIfam" id="TIGR01855">
    <property type="entry name" value="IMP_synth_hisH"/>
    <property type="match status" value="1"/>
</dbReference>
<dbReference type="PANTHER" id="PTHR42701">
    <property type="entry name" value="IMIDAZOLE GLYCEROL PHOSPHATE SYNTHASE SUBUNIT HISH"/>
    <property type="match status" value="1"/>
</dbReference>
<dbReference type="PANTHER" id="PTHR42701:SF1">
    <property type="entry name" value="IMIDAZOLE GLYCEROL PHOSPHATE SYNTHASE SUBUNIT HISH"/>
    <property type="match status" value="1"/>
</dbReference>
<dbReference type="Pfam" id="PF00117">
    <property type="entry name" value="GATase"/>
    <property type="match status" value="1"/>
</dbReference>
<dbReference type="PIRSF" id="PIRSF000495">
    <property type="entry name" value="Amidotransf_hisH"/>
    <property type="match status" value="1"/>
</dbReference>
<dbReference type="SUPFAM" id="SSF52317">
    <property type="entry name" value="Class I glutamine amidotransferase-like"/>
    <property type="match status" value="1"/>
</dbReference>
<dbReference type="PROSITE" id="PS51273">
    <property type="entry name" value="GATASE_TYPE_1"/>
    <property type="match status" value="1"/>
</dbReference>
<organism>
    <name type="scientific">Bifidobacterium longum (strain NCC 2705)</name>
    <dbReference type="NCBI Taxonomy" id="206672"/>
    <lineage>
        <taxon>Bacteria</taxon>
        <taxon>Bacillati</taxon>
        <taxon>Actinomycetota</taxon>
        <taxon>Actinomycetes</taxon>
        <taxon>Bifidobacteriales</taxon>
        <taxon>Bifidobacteriaceae</taxon>
        <taxon>Bifidobacterium</taxon>
    </lineage>
</organism>
<feature type="chain" id="PRO_0000152347" description="Imidazole glycerol phosphate synthase subunit HisH">
    <location>
        <begin position="1"/>
        <end position="215"/>
    </location>
</feature>
<feature type="domain" description="Glutamine amidotransferase type-1" evidence="1">
    <location>
        <begin position="3"/>
        <end position="215"/>
    </location>
</feature>
<feature type="active site" description="Nucleophile" evidence="1">
    <location>
        <position position="81"/>
    </location>
</feature>
<feature type="active site" evidence="1">
    <location>
        <position position="196"/>
    </location>
</feature>
<feature type="active site" evidence="1">
    <location>
        <position position="198"/>
    </location>
</feature>
<gene>
    <name evidence="1" type="primary">hisH</name>
    <name type="ordered locus">BL1299</name>
</gene>
<protein>
    <recommendedName>
        <fullName evidence="1">Imidazole glycerol phosphate synthase subunit HisH</fullName>
        <ecNumber evidence="1">4.3.2.10</ecNumber>
    </recommendedName>
    <alternativeName>
        <fullName evidence="1">IGP synthase glutaminase subunit</fullName>
        <ecNumber evidence="1">3.5.1.2</ecNumber>
    </alternativeName>
    <alternativeName>
        <fullName evidence="1">IGP synthase subunit HisH</fullName>
    </alternativeName>
    <alternativeName>
        <fullName evidence="1">ImGP synthase subunit HisH</fullName>
        <shortName evidence="1">IGPS subunit HisH</shortName>
    </alternativeName>
</protein>
<sequence>MTTAVVFDYGFGNVRSMVRALANLGVDTTLTSDYRQSLEADGLVVPGVGAFAACMEGLKKVDGDRVIYDRIRAGRPVLGVCVGEQIMFEHGLEHGAHAAGIGLIGGSVNLLDADVVPHMGWDTIETAPDSVLLNGVENERFYFVHSYAAMEVKPADTSRFDIDLSDSPERVSWCSYGRSRFVAAYEHGPLSATQFHPEKSGDAGSQLLKNWIATL</sequence>
<proteinExistence type="inferred from homology"/>
<comment type="function">
    <text evidence="1">IGPS catalyzes the conversion of PRFAR and glutamine to IGP, AICAR and glutamate. The HisH subunit catalyzes the hydrolysis of glutamine to glutamate and ammonia as part of the synthesis of IGP and AICAR. The resulting ammonia molecule is channeled to the active site of HisF.</text>
</comment>
<comment type="catalytic activity">
    <reaction evidence="1">
        <text>5-[(5-phospho-1-deoxy-D-ribulos-1-ylimino)methylamino]-1-(5-phospho-beta-D-ribosyl)imidazole-4-carboxamide + L-glutamine = D-erythro-1-(imidazol-4-yl)glycerol 3-phosphate + 5-amino-1-(5-phospho-beta-D-ribosyl)imidazole-4-carboxamide + L-glutamate + H(+)</text>
        <dbReference type="Rhea" id="RHEA:24793"/>
        <dbReference type="ChEBI" id="CHEBI:15378"/>
        <dbReference type="ChEBI" id="CHEBI:29985"/>
        <dbReference type="ChEBI" id="CHEBI:58278"/>
        <dbReference type="ChEBI" id="CHEBI:58359"/>
        <dbReference type="ChEBI" id="CHEBI:58475"/>
        <dbReference type="ChEBI" id="CHEBI:58525"/>
        <dbReference type="EC" id="4.3.2.10"/>
    </reaction>
</comment>
<comment type="catalytic activity">
    <reaction evidence="1">
        <text>L-glutamine + H2O = L-glutamate + NH4(+)</text>
        <dbReference type="Rhea" id="RHEA:15889"/>
        <dbReference type="ChEBI" id="CHEBI:15377"/>
        <dbReference type="ChEBI" id="CHEBI:28938"/>
        <dbReference type="ChEBI" id="CHEBI:29985"/>
        <dbReference type="ChEBI" id="CHEBI:58359"/>
        <dbReference type="EC" id="3.5.1.2"/>
    </reaction>
</comment>
<comment type="pathway">
    <text evidence="1">Amino-acid biosynthesis; L-histidine biosynthesis; L-histidine from 5-phospho-alpha-D-ribose 1-diphosphate: step 5/9.</text>
</comment>
<comment type="subunit">
    <text evidence="1">Heterodimer of HisH and HisF.</text>
</comment>
<comment type="subcellular location">
    <subcellularLocation>
        <location evidence="1">Cytoplasm</location>
    </subcellularLocation>
</comment>
<evidence type="ECO:0000255" key="1">
    <source>
        <dbReference type="HAMAP-Rule" id="MF_00278"/>
    </source>
</evidence>
<keyword id="KW-0028">Amino-acid biosynthesis</keyword>
<keyword id="KW-0963">Cytoplasm</keyword>
<keyword id="KW-0315">Glutamine amidotransferase</keyword>
<keyword id="KW-0368">Histidine biosynthesis</keyword>
<keyword id="KW-0378">Hydrolase</keyword>
<keyword id="KW-0456">Lyase</keyword>
<keyword id="KW-1185">Reference proteome</keyword>
<accession>Q8G4S6</accession>